<proteinExistence type="evidence at protein level"/>
<sequence length="222" mass="25808">MAEKPLFHYDEARGRMESVRWLLAAAGVEYEEKFIHTNEDLEKLRSDGVLMFQQVPMVEVDGMKLVQTRAIMNYFSSKYNLYGKDMKERALIDMYSEGLADLNEMFILYPFDPPGVKEANIALMKEKATNRYFPAFEKVFESHGQDYLVGNKLSKADVHLVEMIYNMEELDTNILANFPLLQALKTRISDMPTIKKFLQPGSQRQPPVDEKSIQKTRKIFKF</sequence>
<keyword id="KW-0963">Cytoplasm</keyword>
<keyword id="KW-0903">Direct protein sequencing</keyword>
<keyword id="KW-1185">Reference proteome</keyword>
<keyword id="KW-0808">Transferase</keyword>
<comment type="function">
    <text evidence="1">Conjugation of reduced glutathione to a wide number of exogenous and endogenous hydrophobic electrophiles.</text>
</comment>
<comment type="catalytic activity">
    <reaction>
        <text>RX + glutathione = an S-substituted glutathione + a halide anion + H(+)</text>
        <dbReference type="Rhea" id="RHEA:16437"/>
        <dbReference type="ChEBI" id="CHEBI:15378"/>
        <dbReference type="ChEBI" id="CHEBI:16042"/>
        <dbReference type="ChEBI" id="CHEBI:17792"/>
        <dbReference type="ChEBI" id="CHEBI:57925"/>
        <dbReference type="ChEBI" id="CHEBI:90779"/>
        <dbReference type="EC" id="2.5.1.18"/>
    </reaction>
</comment>
<comment type="subunit">
    <text evidence="1">Homodimer or heterodimer of GSTA1 and GSTA2.</text>
</comment>
<comment type="subcellular location">
    <subcellularLocation>
        <location evidence="1">Cytoplasm</location>
    </subcellularLocation>
</comment>
<comment type="similarity">
    <text evidence="5">Belongs to the GST superfamily. Alpha family.</text>
</comment>
<accession>Q6AXY0</accession>
<reference key="1">
    <citation type="journal article" date="2004" name="Genome Res.">
        <title>The status, quality, and expansion of the NIH full-length cDNA project: the Mammalian Gene Collection (MGC).</title>
        <authorList>
            <consortium name="The MGC Project Team"/>
        </authorList>
    </citation>
    <scope>NUCLEOTIDE SEQUENCE [LARGE SCALE MRNA]</scope>
    <source>
        <tissue>Testis</tissue>
    </source>
</reference>
<reference key="2">
    <citation type="submission" date="2007-04" db="UniProtKB">
        <authorList>
            <person name="Lubec G."/>
            <person name="Afjehi-Sadat L."/>
            <person name="Chen W.-Q."/>
        </authorList>
    </citation>
    <scope>PROTEIN SEQUENCE OF 21-33 AND 139-152</scope>
    <scope>IDENTIFICATION BY MASS SPECTROMETRY</scope>
    <source>
        <strain>Sprague-Dawley</strain>
        <tissue>Hippocampus</tissue>
        <tissue>Spinal cord</tissue>
    </source>
</reference>
<organism>
    <name type="scientific">Rattus norvegicus</name>
    <name type="common">Rat</name>
    <dbReference type="NCBI Taxonomy" id="10116"/>
    <lineage>
        <taxon>Eukaryota</taxon>
        <taxon>Metazoa</taxon>
        <taxon>Chordata</taxon>
        <taxon>Craniata</taxon>
        <taxon>Vertebrata</taxon>
        <taxon>Euteleostomi</taxon>
        <taxon>Mammalia</taxon>
        <taxon>Eutheria</taxon>
        <taxon>Euarchontoglires</taxon>
        <taxon>Glires</taxon>
        <taxon>Rodentia</taxon>
        <taxon>Myomorpha</taxon>
        <taxon>Muroidea</taxon>
        <taxon>Muridae</taxon>
        <taxon>Murinae</taxon>
        <taxon>Rattus</taxon>
    </lineage>
</organism>
<gene>
    <name type="primary">Gsta6</name>
</gene>
<evidence type="ECO:0000250" key="1"/>
<evidence type="ECO:0000250" key="2">
    <source>
        <dbReference type="UniProtKB" id="P08263"/>
    </source>
</evidence>
<evidence type="ECO:0000250" key="3">
    <source>
        <dbReference type="UniProtKB" id="P13745"/>
    </source>
</evidence>
<evidence type="ECO:0000250" key="4">
    <source>
        <dbReference type="UniProtKB" id="P30711"/>
    </source>
</evidence>
<evidence type="ECO:0000305" key="5"/>
<feature type="chain" id="PRO_0000288804" description="Glutathione S-transferase A6">
    <location>
        <begin position="1"/>
        <end position="222"/>
    </location>
</feature>
<feature type="domain" description="GST N-terminal">
    <location>
        <begin position="3"/>
        <end position="83"/>
    </location>
</feature>
<feature type="domain" description="GST C-terminal">
    <location>
        <begin position="85"/>
        <end position="208"/>
    </location>
</feature>
<feature type="binding site" evidence="3">
    <location>
        <position position="9"/>
    </location>
    <ligand>
        <name>glutathione</name>
        <dbReference type="ChEBI" id="CHEBI:57925"/>
    </ligand>
</feature>
<feature type="binding site" evidence="2">
    <location>
        <position position="45"/>
    </location>
    <ligand>
        <name>glutathione</name>
        <dbReference type="ChEBI" id="CHEBI:57925"/>
    </ligand>
</feature>
<feature type="binding site" evidence="4">
    <location>
        <begin position="54"/>
        <end position="55"/>
    </location>
    <ligand>
        <name>glutathione</name>
        <dbReference type="ChEBI" id="CHEBI:57925"/>
    </ligand>
</feature>
<feature type="binding site" evidence="3">
    <location>
        <begin position="67"/>
        <end position="68"/>
    </location>
    <ligand>
        <name>glutathione</name>
        <dbReference type="ChEBI" id="CHEBI:57925"/>
    </ligand>
</feature>
<dbReference type="EC" id="2.5.1.18"/>
<dbReference type="EMBL" id="BC079271">
    <property type="protein sequence ID" value="AAH79271.1"/>
    <property type="molecule type" value="mRNA"/>
</dbReference>
<dbReference type="RefSeq" id="NP_001019532.1">
    <property type="nucleotide sequence ID" value="NM_001024361.1"/>
</dbReference>
<dbReference type="RefSeq" id="XP_006244718.1">
    <property type="nucleotide sequence ID" value="XM_006244656.5"/>
</dbReference>
<dbReference type="RefSeq" id="XP_006244719.1">
    <property type="nucleotide sequence ID" value="XM_006244657.5"/>
</dbReference>
<dbReference type="RefSeq" id="XP_006244720.1">
    <property type="nucleotide sequence ID" value="XM_006244658.3"/>
</dbReference>
<dbReference type="RefSeq" id="XP_038939993.1">
    <property type="nucleotide sequence ID" value="XM_039084065.2"/>
</dbReference>
<dbReference type="RefSeq" id="XP_038939994.1">
    <property type="nucleotide sequence ID" value="XM_039084066.2"/>
</dbReference>
<dbReference type="SMR" id="Q6AXY0"/>
<dbReference type="BioGRID" id="272417">
    <property type="interactions" value="1"/>
</dbReference>
<dbReference type="FunCoup" id="Q6AXY0">
    <property type="interactions" value="142"/>
</dbReference>
<dbReference type="STRING" id="10116.ENSRNOP00000031201"/>
<dbReference type="iPTMnet" id="Q6AXY0"/>
<dbReference type="PhosphoSitePlus" id="Q6AXY0"/>
<dbReference type="PaxDb" id="10116-ENSRNOP00000031201"/>
<dbReference type="Ensembl" id="ENSRNOT00000036813.3">
    <property type="protein sequence ID" value="ENSRNOP00000031201.2"/>
    <property type="gene ID" value="ENSRNOG00000033402.3"/>
</dbReference>
<dbReference type="GeneID" id="501110"/>
<dbReference type="KEGG" id="rno:501110"/>
<dbReference type="UCSC" id="RGD:1565402">
    <property type="organism name" value="rat"/>
</dbReference>
<dbReference type="AGR" id="RGD:1565402"/>
<dbReference type="CTD" id="501110"/>
<dbReference type="RGD" id="1565402">
    <property type="gene designation" value="Gsta6"/>
</dbReference>
<dbReference type="eggNOG" id="KOG1695">
    <property type="taxonomic scope" value="Eukaryota"/>
</dbReference>
<dbReference type="GeneTree" id="ENSGT00940000154526"/>
<dbReference type="HOGENOM" id="CLU_039475_4_0_1"/>
<dbReference type="InParanoid" id="Q6AXY0"/>
<dbReference type="OMA" id="HLVEMIY"/>
<dbReference type="OrthoDB" id="414243at2759"/>
<dbReference type="PhylomeDB" id="Q6AXY0"/>
<dbReference type="TreeFam" id="TF105321"/>
<dbReference type="Reactome" id="R-RNO-156590">
    <property type="pathway name" value="Glutathione conjugation"/>
</dbReference>
<dbReference type="Reactome" id="R-RNO-189483">
    <property type="pathway name" value="Heme degradation"/>
</dbReference>
<dbReference type="Reactome" id="R-RNO-9748787">
    <property type="pathway name" value="Azathioprine ADME"/>
</dbReference>
<dbReference type="PRO" id="PR:Q6AXY0"/>
<dbReference type="Proteomes" id="UP000002494">
    <property type="component" value="Chromosome 9"/>
</dbReference>
<dbReference type="Bgee" id="ENSRNOG00000033402">
    <property type="expression patterns" value="Expressed in ovary and 18 other cell types or tissues"/>
</dbReference>
<dbReference type="GO" id="GO:0005829">
    <property type="term" value="C:cytosol"/>
    <property type="evidence" value="ECO:0000318"/>
    <property type="project" value="GO_Central"/>
</dbReference>
<dbReference type="GO" id="GO:0004364">
    <property type="term" value="F:glutathione transferase activity"/>
    <property type="evidence" value="ECO:0000250"/>
    <property type="project" value="UniProtKB"/>
</dbReference>
<dbReference type="GO" id="GO:0006749">
    <property type="term" value="P:glutathione metabolic process"/>
    <property type="evidence" value="ECO:0000250"/>
    <property type="project" value="UniProtKB"/>
</dbReference>
<dbReference type="GO" id="GO:0006805">
    <property type="term" value="P:xenobiotic metabolic process"/>
    <property type="evidence" value="ECO:0000318"/>
    <property type="project" value="GO_Central"/>
</dbReference>
<dbReference type="CDD" id="cd03208">
    <property type="entry name" value="GST_C_Alpha"/>
    <property type="match status" value="1"/>
</dbReference>
<dbReference type="FunFam" id="1.20.1050.10:FF:000005">
    <property type="entry name" value="Glutathione S-transferase A1"/>
    <property type="match status" value="1"/>
</dbReference>
<dbReference type="Gene3D" id="1.20.1050.10">
    <property type="match status" value="1"/>
</dbReference>
<dbReference type="Gene3D" id="3.40.30.10">
    <property type="entry name" value="Glutaredoxin"/>
    <property type="match status" value="1"/>
</dbReference>
<dbReference type="InterPro" id="IPR010987">
    <property type="entry name" value="Glutathione-S-Trfase_C-like"/>
</dbReference>
<dbReference type="InterPro" id="IPR036282">
    <property type="entry name" value="Glutathione-S-Trfase_C_sf"/>
</dbReference>
<dbReference type="InterPro" id="IPR004045">
    <property type="entry name" value="Glutathione_S-Trfase_N"/>
</dbReference>
<dbReference type="InterPro" id="IPR003080">
    <property type="entry name" value="GST_alpha"/>
</dbReference>
<dbReference type="InterPro" id="IPR004046">
    <property type="entry name" value="GST_C"/>
</dbReference>
<dbReference type="InterPro" id="IPR050213">
    <property type="entry name" value="GST_superfamily"/>
</dbReference>
<dbReference type="InterPro" id="IPR036249">
    <property type="entry name" value="Thioredoxin-like_sf"/>
</dbReference>
<dbReference type="PANTHER" id="PTHR11571">
    <property type="entry name" value="GLUTATHIONE S-TRANSFERASE"/>
    <property type="match status" value="1"/>
</dbReference>
<dbReference type="PANTHER" id="PTHR11571:SF107">
    <property type="entry name" value="GLUTATHIONE S-TRANSFERASE A1"/>
    <property type="match status" value="1"/>
</dbReference>
<dbReference type="Pfam" id="PF14497">
    <property type="entry name" value="GST_C_3"/>
    <property type="match status" value="1"/>
</dbReference>
<dbReference type="Pfam" id="PF02798">
    <property type="entry name" value="GST_N"/>
    <property type="match status" value="1"/>
</dbReference>
<dbReference type="PRINTS" id="PR01266">
    <property type="entry name" value="GSTRNSFRASEA"/>
</dbReference>
<dbReference type="SFLD" id="SFLDG01205">
    <property type="entry name" value="AMPS.1"/>
    <property type="match status" value="1"/>
</dbReference>
<dbReference type="SFLD" id="SFLDG00363">
    <property type="entry name" value="AMPS_(cytGST):_Alpha-__Mu-__Pi"/>
    <property type="match status" value="1"/>
</dbReference>
<dbReference type="SUPFAM" id="SSF47616">
    <property type="entry name" value="GST C-terminal domain-like"/>
    <property type="match status" value="1"/>
</dbReference>
<dbReference type="SUPFAM" id="SSF52833">
    <property type="entry name" value="Thioredoxin-like"/>
    <property type="match status" value="1"/>
</dbReference>
<dbReference type="PROSITE" id="PS50405">
    <property type="entry name" value="GST_CTER"/>
    <property type="match status" value="1"/>
</dbReference>
<dbReference type="PROSITE" id="PS50404">
    <property type="entry name" value="GST_NTER"/>
    <property type="match status" value="1"/>
</dbReference>
<protein>
    <recommendedName>
        <fullName>Glutathione S-transferase A6</fullName>
        <ecNumber>2.5.1.18</ecNumber>
    </recommendedName>
    <alternativeName>
        <fullName>GST class-alpha member 6</fullName>
    </alternativeName>
</protein>
<name>GSTA6_RAT</name>